<dbReference type="EMBL" id="AF013122">
    <property type="protein sequence ID" value="AAB88410.1"/>
    <property type="molecule type" value="Genomic_DNA"/>
</dbReference>
<dbReference type="EMBL" id="AF022236">
    <property type="protein sequence ID" value="AAC38390.1"/>
    <property type="molecule type" value="Genomic_DNA"/>
</dbReference>
<dbReference type="EMBL" id="FM180568">
    <property type="protein sequence ID" value="CAS11489.1"/>
    <property type="molecule type" value="Genomic_DNA"/>
</dbReference>
<dbReference type="RefSeq" id="WP_001339882.1">
    <property type="nucleotide sequence ID" value="NC_011601.1"/>
</dbReference>
<dbReference type="PDB" id="2CI9">
    <property type="method" value="X-ray"/>
    <property type="resolution" value="1.50 A"/>
    <property type="chains" value="L/M=470-481"/>
</dbReference>
<dbReference type="PDB" id="2CIA">
    <property type="method" value="X-ray"/>
    <property type="resolution" value="1.45 A"/>
    <property type="chains" value="L=472-481"/>
</dbReference>
<dbReference type="PDB" id="5WEZ">
    <property type="method" value="X-ray"/>
    <property type="resolution" value="2.74 A"/>
    <property type="chains" value="B=32-80"/>
</dbReference>
<dbReference type="PDBsum" id="2CI9"/>
<dbReference type="PDBsum" id="2CIA"/>
<dbReference type="PDBsum" id="5WEZ"/>
<dbReference type="SASBDB" id="B7UM99"/>
<dbReference type="SMR" id="B7UM99"/>
<dbReference type="DIP" id="DIP-27648N"/>
<dbReference type="DIP" id="DIP-55921N"/>
<dbReference type="IntAct" id="B7UM99">
    <property type="interactions" value="18"/>
</dbReference>
<dbReference type="MINT" id="B7UM99"/>
<dbReference type="TCDB" id="8.A.223.1.1">
    <property type="family name" value="the translocated intimin receptor (tir) family"/>
</dbReference>
<dbReference type="iPTMnet" id="B7UM99"/>
<dbReference type="KEGG" id="ecg:E2348C_3941"/>
<dbReference type="HOGENOM" id="CLU_497576_0_0_6"/>
<dbReference type="EvolutionaryTrace" id="B7UM99"/>
<dbReference type="PHI-base" id="PHI:10377"/>
<dbReference type="Proteomes" id="UP000008205">
    <property type="component" value="Chromosome"/>
</dbReference>
<dbReference type="GO" id="GO:0005576">
    <property type="term" value="C:extracellular region"/>
    <property type="evidence" value="ECO:0007669"/>
    <property type="project" value="UniProtKB-SubCell"/>
</dbReference>
<dbReference type="GO" id="GO:0020002">
    <property type="term" value="C:host cell plasma membrane"/>
    <property type="evidence" value="ECO:0007669"/>
    <property type="project" value="UniProtKB-SubCell"/>
</dbReference>
<dbReference type="GO" id="GO:0016020">
    <property type="term" value="C:membrane"/>
    <property type="evidence" value="ECO:0007669"/>
    <property type="project" value="UniProtKB-KW"/>
</dbReference>
<dbReference type="GO" id="GO:0008289">
    <property type="term" value="F:lipid binding"/>
    <property type="evidence" value="ECO:0000269"/>
    <property type="project" value="DisProt"/>
</dbReference>
<dbReference type="GO" id="GO:0042169">
    <property type="term" value="F:SH2 domain binding"/>
    <property type="evidence" value="ECO:0000269"/>
    <property type="project" value="DisProt"/>
</dbReference>
<dbReference type="Gene3D" id="4.10.820.10">
    <property type="entry name" value="Translocated intimin receptor, central domain"/>
    <property type="match status" value="1"/>
</dbReference>
<dbReference type="InterPro" id="IPR037003">
    <property type="entry name" value="Tir_central_sf"/>
</dbReference>
<dbReference type="InterPro" id="IPR022638">
    <property type="entry name" value="Transloc_intimin_rcpt"/>
</dbReference>
<dbReference type="InterPro" id="IPR022639">
    <property type="entry name" value="Transloc_intimin_rcpt_C"/>
</dbReference>
<dbReference type="InterPro" id="IPR003536">
    <property type="entry name" value="Transloc_intimin_rcpt_cen_dom"/>
</dbReference>
<dbReference type="InterPro" id="IPR022633">
    <property type="entry name" value="Transloc_intimin_rcpt_N"/>
</dbReference>
<dbReference type="NCBIfam" id="NF033637">
    <property type="entry name" value="transloc_TIR"/>
    <property type="match status" value="1"/>
</dbReference>
<dbReference type="Pfam" id="PF07489">
    <property type="entry name" value="Tir_receptor_C"/>
    <property type="match status" value="1"/>
</dbReference>
<dbReference type="Pfam" id="PF03549">
    <property type="entry name" value="Tir_receptor_M"/>
    <property type="match status" value="1"/>
</dbReference>
<dbReference type="Pfam" id="PF07490">
    <property type="entry name" value="Tir_receptor_N"/>
    <property type="match status" value="1"/>
</dbReference>
<dbReference type="PRINTS" id="PR01370">
    <property type="entry name" value="TRNSINTIMINR"/>
</dbReference>
<proteinExistence type="evidence at protein level"/>
<evidence type="ECO:0000255" key="1"/>
<evidence type="ECO:0000256" key="2">
    <source>
        <dbReference type="SAM" id="MobiDB-lite"/>
    </source>
</evidence>
<evidence type="ECO:0000269" key="3">
    <source>
    </source>
</evidence>
<evidence type="ECO:0000269" key="4">
    <source>
    </source>
</evidence>
<evidence type="ECO:0000269" key="5">
    <source>
    </source>
</evidence>
<evidence type="ECO:0000269" key="6">
    <source>
    </source>
</evidence>
<evidence type="ECO:0000269" key="7">
    <source>
    </source>
</evidence>
<evidence type="ECO:0000269" key="8">
    <source>
    </source>
</evidence>
<evidence type="ECO:0000269" key="9">
    <source>
    </source>
</evidence>
<evidence type="ECO:0000269" key="10">
    <source>
    </source>
</evidence>
<evidence type="ECO:0000269" key="11">
    <source>
    </source>
</evidence>
<evidence type="ECO:0000269" key="12">
    <source>
    </source>
</evidence>
<evidence type="ECO:0000269" key="13">
    <source>
    </source>
</evidence>
<evidence type="ECO:0000269" key="14">
    <source>
    </source>
</evidence>
<evidence type="ECO:0000305" key="15"/>
<evidence type="ECO:0007829" key="16">
    <source>
        <dbReference type="PDB" id="5WEZ"/>
    </source>
</evidence>
<organism>
    <name type="scientific">Escherichia coli O127:H6 (strain E2348/69 / EPEC)</name>
    <dbReference type="NCBI Taxonomy" id="574521"/>
    <lineage>
        <taxon>Bacteria</taxon>
        <taxon>Pseudomonadati</taxon>
        <taxon>Pseudomonadota</taxon>
        <taxon>Gammaproteobacteria</taxon>
        <taxon>Enterobacterales</taxon>
        <taxon>Enterobacteriaceae</taxon>
        <taxon>Escherichia</taxon>
    </lineage>
</organism>
<reference key="1">
    <citation type="journal article" date="1997" name="Cell">
        <title>Enteropathogenic E. coli (EPEC) transfers its receptor for intimate adherence into mammalian cells.</title>
        <authorList>
            <person name="Kenny B."/>
            <person name="DeVinney R."/>
            <person name="Stein M."/>
            <person name="Reinscheid D.J."/>
            <person name="Frey E.A."/>
            <person name="Finlay B.B."/>
        </authorList>
    </citation>
    <scope>NUCLEOTIDE SEQUENCE [GENOMIC DNA]</scope>
    <scope>PROTEIN SEQUENCE OF 2-31</scope>
    <scope>FUNCTION</scope>
    <scope>INTERACTION WITH INTIMIN</scope>
    <scope>SUBCELLULAR LOCATION</scope>
    <scope>SECRETION VIA TYPE III SECRETION SYSTEM</scope>
    <scope>PHOSPHORYLATION</scope>
    <scope>GENE NAME</scope>
    <source>
        <strain>E2348/69 / EPEC</strain>
    </source>
</reference>
<reference key="2">
    <citation type="journal article" date="1998" name="Mol. Microbiol.">
        <title>The complete sequence of the locus of enterocyte effacement (LEE) from enteropathogenic Escherichia coli E2348/69.</title>
        <authorList>
            <person name="Elliott S.J."/>
            <person name="Wainwright L.A."/>
            <person name="McDaniel T.K."/>
            <person name="Jarvis K.G."/>
            <person name="Deng Y.K."/>
            <person name="Lai L.C."/>
            <person name="McNamara B.P."/>
            <person name="Donnenberg M.S."/>
            <person name="Kaper J.B."/>
        </authorList>
    </citation>
    <scope>NUCLEOTIDE SEQUENCE [GENOMIC DNA]</scope>
    <source>
        <strain>E2348/69 / EPEC</strain>
    </source>
</reference>
<reference key="3">
    <citation type="journal article" date="2009" name="J. Bacteriol.">
        <title>Complete genome sequence and comparative genome analysis of enteropathogenic Escherichia coli O127:H6 strain E2348/69.</title>
        <authorList>
            <person name="Iguchi A."/>
            <person name="Thomson N.R."/>
            <person name="Ogura Y."/>
            <person name="Saunders D."/>
            <person name="Ooka T."/>
            <person name="Henderson I.R."/>
            <person name="Harris D."/>
            <person name="Asadulghani M."/>
            <person name="Kurokawa K."/>
            <person name="Dean P."/>
            <person name="Kenny B."/>
            <person name="Quail M.A."/>
            <person name="Thurston S."/>
            <person name="Dougan G."/>
            <person name="Hayashi T."/>
            <person name="Parkhill J."/>
            <person name="Frankel G."/>
        </authorList>
    </citation>
    <scope>NUCLEOTIDE SEQUENCE [LARGE SCALE GENOMIC DNA]</scope>
    <source>
        <strain>E2348/69 / EPEC</strain>
    </source>
</reference>
<reference key="4">
    <citation type="journal article" date="1998" name="Mol. Microbiol.">
        <title>EspE, a novel secreted protein of attaching and effacing bacteria, is directly translocated into infected host cells, where it appears as a tyrosine-phosphorylated 90 kDa protein.</title>
        <authorList>
            <person name="Deibel C."/>
            <person name="Kramer S."/>
            <person name="Chakraborty T."/>
            <person name="Ebel F."/>
        </authorList>
    </citation>
    <scope>SUBCELLULAR LOCATION</scope>
    <source>
        <strain>E2348/69 / EPEC</strain>
    </source>
</reference>
<reference key="5">
    <citation type="journal article" date="1999" name="Infect. Immun.">
        <title>Enterohemorrhagic Escherichia coli O157:H7 produces Tir, which is translocated to the host cell membrane but is not tyrosine phosphorylated.</title>
        <authorList>
            <person name="DeVinney R."/>
            <person name="Stein M."/>
            <person name="Reinscheid D."/>
            <person name="Abe A."/>
            <person name="Ruschkowski S."/>
            <person name="Finlay B.B."/>
        </authorList>
    </citation>
    <scope>INTERACTION WITH INTIMIN</scope>
    <source>
        <strain>E2348/69 / EPEC</strain>
    </source>
</reference>
<reference key="6">
    <citation type="journal article" date="1999" name="Mol. Microbiol.">
        <title>Phosphorylation of tyrosine 474 of the enteropathogenic Escherichia coli (EPEC) Tir receptor molecule is essential for actin nucleating activity and is preceded by additional host modifications.</title>
        <authorList>
            <person name="Kenny B."/>
        </authorList>
    </citation>
    <scope>FUNCTION</scope>
    <scope>SUBCELLULAR LOCATION</scope>
    <scope>TOPOLOGY</scope>
    <scope>DOMAIN</scope>
    <scope>INTERACTION WITH INTIMIN</scope>
    <scope>PHOSPHORYLATION</scope>
    <scope>MUTAGENESIS OF TYR-474 AND TYR-483</scope>
    <source>
        <strain>E2348/69 / EPEC</strain>
    </source>
</reference>
<reference key="7">
    <citation type="journal article" date="2000" name="Curr. Biol.">
        <title>Enteropathogenic E. coli translocated intimin receptor, Tir, interacts directly with alpha-actinin.</title>
        <authorList>
            <person name="Goosney D.L."/>
            <person name="DeVinney R."/>
            <person name="Pfuetzner R.A."/>
            <person name="Frey E.A."/>
            <person name="Strynadka N.C."/>
            <person name="Finlay B.B."/>
        </authorList>
    </citation>
    <scope>INTERACTION WITH HOST ALPHA-ACTININ</scope>
    <scope>DOMAIN</scope>
    <source>
        <strain>EPEC</strain>
    </source>
</reference>
<reference key="8">
    <citation type="journal article" date="2001" name="Nat. Cell Biol.">
        <title>Enteropathogenic E. coli Tir binds Nck to initiate actin pedestal formation in host cells.</title>
        <authorList>
            <person name="Gruenheid S."/>
            <person name="DeVinney R."/>
            <person name="Bladt F."/>
            <person name="Goosney D."/>
            <person name="Gelkop S."/>
            <person name="Gish G.D."/>
            <person name="Pawson T."/>
            <person name="Finlay B.B."/>
        </authorList>
    </citation>
    <scope>INTERACTION WITH HOST NCK</scope>
    <source>
        <strain>E2348/69 / EPEC</strain>
    </source>
</reference>
<reference key="9">
    <citation type="journal article" date="2002" name="Mol. Microbiol.">
        <title>A tyrosine-phosphorylated 12-amino-acid sequence of enteropathogenic Escherichia coli Tir binds the host adaptor protein Nck and is required for Nck localization to actin pedestals.</title>
        <authorList>
            <person name="Campellone K.G."/>
            <person name="Giese A."/>
            <person name="Tipper D.J."/>
            <person name="Leong J.M."/>
        </authorList>
    </citation>
    <scope>INTERACTION WITH HOST NCK</scope>
    <scope>PHOSPHORYLATION</scope>
    <scope>MUTAGENESIS OF TYR-474</scope>
    <source>
        <strain>E2348/69 / EPEC</strain>
    </source>
</reference>
<reference key="10">
    <citation type="journal article" date="2004" name="Cell. Microbiol.">
        <title>Enterohaemorrhagic and enteropathogenic Escherichia coli use different mechanisms for actin pedestal formation that converge on N-WASP.</title>
        <authorList>
            <person name="Lommel S."/>
            <person name="Benesch S."/>
            <person name="Rohde M."/>
            <person name="Wehland J."/>
            <person name="Rottner K."/>
        </authorList>
    </citation>
    <scope>FUNCTION</scope>
    <source>
        <strain>E2348/69 / EPEC</strain>
    </source>
</reference>
<reference key="11">
    <citation type="journal article" date="2004" name="J. Cell Biol.">
        <title>Clustering of Nck by a 12-residue Tir phosphopeptide is sufficient to trigger localized actin assembly.</title>
        <authorList>
            <person name="Campellone K.G."/>
            <person name="Rankin S."/>
            <person name="Pawson T."/>
            <person name="Kirschner M.W."/>
            <person name="Tipper D.J."/>
            <person name="Leong J.M."/>
        </authorList>
    </citation>
    <scope>FUNCTION</scope>
    <scope>SUBCELLULAR LOCATION</scope>
    <scope>INTERACTION WITH INTIMIN AND HOST NCK</scope>
    <scope>PHOSPHORYLATION</scope>
    <scope>DOMAIN</scope>
    <source>
        <strain>E2348/69 / EPEC</strain>
    </source>
</reference>
<reference key="12">
    <citation type="journal article" date="2005" name="Mol. Microbiol.">
        <title>Nck-independent actin assembly is mediated by two phosphorylated tyrosines within enteropathogenic Escherichia coli Tir.</title>
        <authorList>
            <person name="Campellone K.G."/>
            <person name="Leong J.M."/>
        </authorList>
    </citation>
    <scope>FUNCTION</scope>
    <scope>INTERACTION WITH HOST NCK</scope>
    <scope>PHOSPHORYLATION AT TYR-454 AND TYR-474</scope>
    <scope>MUTAGENESIS OF TYR-454 AND TYR-474</scope>
    <source>
        <strain>E2348/69 / EPEC</strain>
    </source>
</reference>
<reference key="13">
    <citation type="journal article" date="2006" name="J. Biol. Chem.">
        <title>Insertion of the enteropathogenic Escherichia coli Tir virulence protein into membranes in vitro.</title>
        <authorList>
            <person name="Race P.R."/>
            <person name="Lakey J.H."/>
            <person name="Banfield M.J."/>
        </authorList>
    </citation>
    <scope>SUBCELLULAR LOCATION</scope>
    <source>
        <strain>EPEC</strain>
    </source>
</reference>
<reference key="14">
    <citation type="journal article" date="2007" name="Cell. Microbiol.">
        <title>Enterohaemorrhagic and enteropathogenic Escherichia coli Tir proteins trigger a common Nck-independent actin assembly pathway.</title>
        <authorList>
            <person name="Brady M.J."/>
            <person name="Campellone K.G."/>
            <person name="Ghildiyal M."/>
            <person name="Leong J.M."/>
        </authorList>
    </citation>
    <scope>FUNCTION</scope>
    <scope>MUTAGENESIS OF ASN-452; PRO-453; TYR-454 AND TYR-474</scope>
    <source>
        <strain>E2348/69 / EPEC</strain>
    </source>
</reference>
<reference key="15">
    <citation type="journal article" date="2009" name="Cell Host Microbe">
        <title>IRSp53 links the enterohemorrhagic E. coli effectors Tir and EspFU for actin pedestal formation.</title>
        <authorList>
            <person name="Weiss S.M."/>
            <person name="Ladwein M."/>
            <person name="Schmidt D."/>
            <person name="Ehinger J."/>
            <person name="Lommel S."/>
            <person name="Stading K."/>
            <person name="Beutling U."/>
            <person name="Disanza A."/>
            <person name="Frank R."/>
            <person name="Jansch L."/>
            <person name="Scita G."/>
            <person name="Gunzer F."/>
            <person name="Rottner K."/>
            <person name="Stradal T.E."/>
        </authorList>
    </citation>
    <scope>INTERACTION WITH HOST BAIAP2</scope>
    <source>
        <strain>E2348/69 / EPEC</strain>
    </source>
</reference>
<reference key="16">
    <citation type="journal article" date="2010" name="FEBS J.">
        <title>Cytoskeleton-modulating effectors of enteropathogenic and enterohaemorrhagic Escherichia coli: Tir, EspFU and actin pedestal assembly.</title>
        <authorList>
            <person name="Campellone K.G."/>
        </authorList>
    </citation>
    <scope>REVIEW</scope>
</reference>
<reference key="17">
    <citation type="journal article" date="2006" name="J. Biol. Chem.">
        <title>The phosphotyrosine peptide binding specificity of Nck1 and Nck2 Src homology 2 domains.</title>
        <authorList>
            <person name="Frese S."/>
            <person name="Schubert W.D."/>
            <person name="Findeis A.C."/>
            <person name="Marquardt T."/>
            <person name="Roske Y.S."/>
            <person name="Stradal T.E."/>
            <person name="Heinz D.W."/>
        </authorList>
    </citation>
    <scope>X-RAY CRYSTALLOGRAPHY (1.45 ANGSTROMS) OF 472-481 IN COMPLEX WITH NCK1 AND NCK2</scope>
    <scope>PHOSPHORYLATION AT TYR-474</scope>
</reference>
<comment type="function">
    <text evidence="3 8 9 10 12 14">Multifunctional protein that is required for efficient pedestal formation in host epithelial cells during infection. The extracellular region acts as a receptor for bacterial intimin, allowing the bacterium to attach tightly to the host-cell surface. Simultaneously, the intracellular region initiates a signaling cascade in the host cell, which leads to actin polymerization and formation of actin pedestals at the sites of bacterial adhesion. In strain E2348/69, acts mainly via the host adaptor proteins NCK1 and NCK2. Once clustered and phosphorylated at Tyr-474, Tir binds to NCK proteins, which in turn bind and activate host WASL/N-WASP, leading to actin polymerization. Can also trigger an inefficient, NCK-independent pedestal formation. This pathway involves phosphorylation of Tyr-454 and probably a putative host adaptor. Also acts via direct binding to the host cytoskeletal protein alpha-actinin in a NCK- and phosphotyrosine-independent manner. This interaction may stabilize the pedestal, but is not essential for its formation.</text>
</comment>
<comment type="subunit">
    <text evidence="3 4 5 6 7 8 10 11 13 14">Interacts with intimin. Interacts with host proteins NCK1, NCK2, alpha-actinin and BAIAP2.</text>
</comment>
<comment type="interaction">
    <interactant intactId="EBI-2504426">
        <id>B7UM99</id>
    </interactant>
    <interactant intactId="EBI-2504434">
        <id>P21244</id>
        <label>cesT</label>
    </interactant>
    <organismsDiffer>false</organismsDiffer>
    <experiments>6</experiments>
</comment>
<comment type="interaction">
    <interactant intactId="EBI-2504426">
        <id>B7UM99</id>
    </interactant>
    <interactant intactId="EBI-352622">
        <id>P07355</id>
        <label>ANXA2</label>
    </interactant>
    <organismsDiffer>true</organismsDiffer>
    <experiments>3</experiments>
</comment>
<comment type="interaction">
    <interactant intactId="EBI-2504426">
        <id>B7UM99</id>
    </interactant>
    <interactant intactId="EBI-6174091">
        <id>Q9UQB8-4</id>
        <label>BAIAP2</label>
    </interactant>
    <organismsDiffer>true</organismsDiffer>
    <experiments>3</experiments>
</comment>
<comment type="interaction">
    <interactant intactId="EBI-2504426">
        <id>B7UM99</id>
    </interactant>
    <interactant intactId="EBI-351886">
        <id>Q14247</id>
        <label>CTTN</label>
    </interactant>
    <organismsDiffer>true</organismsDiffer>
    <experiments>3</experiments>
</comment>
<comment type="interaction">
    <interactant intactId="EBI-2504426">
        <id>B7UM99</id>
    </interactant>
    <interactant intactId="EBI-297888">
        <id>P05783</id>
        <label>KRT18</label>
    </interactant>
    <organismsDiffer>true</organismsDiffer>
    <experiments>5</experiments>
</comment>
<comment type="interaction">
    <interactant intactId="EBI-2504426">
        <id>B7UM99</id>
    </interactant>
    <interactant intactId="EBI-78260">
        <id>P29350</id>
        <label>PTPN6</label>
    </interactant>
    <organismsDiffer>true</organismsDiffer>
    <experiments>4</experiments>
</comment>
<comment type="interaction">
    <interactant intactId="EBI-2504426">
        <id>B7UM99</id>
    </interactant>
    <interactant intactId="EBI-2620699">
        <id>P29351</id>
        <label>Ptpn6</label>
    </interactant>
    <organismsDiffer>true</organismsDiffer>
    <experiments>2</experiments>
</comment>
<comment type="interaction">
    <interactant intactId="EBI-2504426">
        <id>B7UM99</id>
    </interactant>
    <interactant intactId="EBI-359815">
        <id>P31946</id>
        <label>YWHAB</label>
    </interactant>
    <organismsDiffer>true</organismsDiffer>
    <experiments>2</experiments>
</comment>
<comment type="interaction">
    <interactant intactId="EBI-2504426">
        <id>B7UM99</id>
    </interactant>
    <interactant intactId="EBI-359854">
        <id>P27348</id>
        <label>YWHAQ</label>
    </interactant>
    <organismsDiffer>true</organismsDiffer>
    <experiments>6</experiments>
</comment>
<comment type="subcellular location">
    <subcellularLocation>
        <location>Secreted</location>
    </subcellularLocation>
    <subcellularLocation>
        <location>Host cell membrane</location>
        <topology>Multi-pass membrane protein</topology>
    </subcellularLocation>
    <text>Secreted via the type III secretion system (T3SS). Released into the host cytoplasm via T3SS and then independently inserts into the plasma membrane from a cytoplasmic location. In host cells, localizes to the tip of the actin pedestal.</text>
</comment>
<comment type="domain">
    <text evidence="3 5 8">The intracellular N-terminal region interacts with host alpha-actinin and is not required for pedestal formation. The central extracellular region (amino acids 277-332) is involved in bacterial intimin binding. The intracellular C-terminal region binds to host NCK.</text>
</comment>
<comment type="PTM">
    <text evidence="3 7 8 10 11 14">Phosphorylated on Tyr-474 by host kinases. Tyr-454 can also be phosphorylated, although at lower efficiency. Phosphorylation is stimulated by clustering of Tir by intimin.</text>
</comment>
<comment type="similarity">
    <text evidence="15">Belongs to the Tir receptor family.</text>
</comment>
<protein>
    <recommendedName>
        <fullName>Translocated intimin receptor Tir</fullName>
    </recommendedName>
    <alternativeName>
        <fullName>Secreted effector protein Tir</fullName>
    </alternativeName>
</protein>
<name>TIR_ECO27</name>
<keyword id="KW-0002">3D-structure</keyword>
<keyword id="KW-0903">Direct protein sequencing</keyword>
<keyword id="KW-1032">Host cell membrane</keyword>
<keyword id="KW-1043">Host membrane</keyword>
<keyword id="KW-0472">Membrane</keyword>
<keyword id="KW-0597">Phosphoprotein</keyword>
<keyword id="KW-0675">Receptor</keyword>
<keyword id="KW-1185">Reference proteome</keyword>
<keyword id="KW-0964">Secreted</keyword>
<keyword id="KW-0812">Transmembrane</keyword>
<keyword id="KW-1133">Transmembrane helix</keyword>
<keyword id="KW-0843">Virulence</keyword>
<sequence>MPIGNLGNNVNGNHLIPPAPPLPSQTDGAARGGTGHLISSTGALGSRSLFSPLRNSMADSVDSRDIPGLPTNPSRLAAATSETCLLGGFEVLHDKGPLDILNTQIGPSAFRVEVQADGTHAAIGEKNGLEVSVTLSPQEWSSLQSIDTEGKNRFVFTGGRGGSGHPMVTVASDIAEARTKILAKLDPDNHGGRQPKDVDTRSVGVGSASGIDDGVVSETHTSTTNSSVRSDPKFWVSVGAIAAGLAGLAATGIAQALALTPEPDDPTTTDPDQAANAAESATKDQLTQEAFKNPENQKVNIDANGNAIPSGELKDDIVEQIAQQAKEAGEVARQQAVESNAQAQQRYEDQHARRQEELQLSSGIGYGLSSALIVAGGIGAGVTTALHRRNQPAEQTTTTTTHTVVQQQTGGNTPAQGGTDATRAEDASLNRRDSQGSVASTHWSDSSSEVVNPYAEVGGARNSLSAHQPEEHIYDEVAADPGYSVIQNFSGSGPVTGRLIGTPGQGIQSTYALLANSGGLRLGMGGLTSGGESAVSSVNAAPTPGPVRFV</sequence>
<feature type="chain" id="PRO_0000414050" description="Translocated intimin receptor Tir">
    <location>
        <begin position="1"/>
        <end position="550"/>
    </location>
</feature>
<feature type="topological domain" description="Cytoplasmic" evidence="1">
    <location>
        <begin position="1"/>
        <end position="233"/>
    </location>
</feature>
<feature type="transmembrane region" description="Helical" evidence="1">
    <location>
        <begin position="234"/>
        <end position="254"/>
    </location>
</feature>
<feature type="topological domain" description="Extracellular" evidence="1">
    <location>
        <begin position="255"/>
        <end position="362"/>
    </location>
</feature>
<feature type="transmembrane region" description="Helical" evidence="1">
    <location>
        <begin position="363"/>
        <end position="383"/>
    </location>
</feature>
<feature type="topological domain" description="Cytoplasmic" evidence="1">
    <location>
        <begin position="384"/>
        <end position="550"/>
    </location>
</feature>
<feature type="region of interest" description="Disordered" evidence="2">
    <location>
        <begin position="1"/>
        <end position="38"/>
    </location>
</feature>
<feature type="region of interest" description="Disordered" evidence="2">
    <location>
        <begin position="185"/>
        <end position="228"/>
    </location>
</feature>
<feature type="region of interest" description="Disordered" evidence="2">
    <location>
        <begin position="260"/>
        <end position="285"/>
    </location>
</feature>
<feature type="region of interest" description="Disordered" evidence="2">
    <location>
        <begin position="332"/>
        <end position="354"/>
    </location>
</feature>
<feature type="region of interest" description="Disordered" evidence="2">
    <location>
        <begin position="389"/>
        <end position="449"/>
    </location>
</feature>
<feature type="short sequence motif" description="Essential for NCK-independent actin pedestal formation">
    <location>
        <begin position="452"/>
        <end position="454"/>
    </location>
</feature>
<feature type="compositionally biased region" description="Low complexity" evidence="2">
    <location>
        <begin position="1"/>
        <end position="13"/>
    </location>
</feature>
<feature type="compositionally biased region" description="Basic and acidic residues" evidence="2">
    <location>
        <begin position="185"/>
        <end position="200"/>
    </location>
</feature>
<feature type="compositionally biased region" description="Polar residues" evidence="2">
    <location>
        <begin position="218"/>
        <end position="228"/>
    </location>
</feature>
<feature type="compositionally biased region" description="Polar residues" evidence="2">
    <location>
        <begin position="336"/>
        <end position="345"/>
    </location>
</feature>
<feature type="compositionally biased region" description="Low complexity" evidence="2">
    <location>
        <begin position="395"/>
        <end position="409"/>
    </location>
</feature>
<feature type="compositionally biased region" description="Basic and acidic residues" evidence="2">
    <location>
        <begin position="422"/>
        <end position="434"/>
    </location>
</feature>
<feature type="compositionally biased region" description="Polar residues" evidence="2">
    <location>
        <begin position="435"/>
        <end position="449"/>
    </location>
</feature>
<feature type="modified residue" description="Phosphotyrosine" evidence="10">
    <location>
        <position position="454"/>
    </location>
</feature>
<feature type="modified residue" description="Phosphotyrosine" evidence="10 11">
    <location>
        <position position="474"/>
    </location>
</feature>
<feature type="mutagenesis site" description="Lack of pedestal formation; when associated with F-474." evidence="12">
    <original>N</original>
    <variation>A</variation>
    <location>
        <position position="452"/>
    </location>
</feature>
<feature type="mutagenesis site" description="Lack of pedestal formation; when associated with F-474." evidence="12">
    <original>P</original>
    <variation>A</variation>
    <location>
        <position position="453"/>
    </location>
</feature>
<feature type="mutagenesis site" description="Lack of pedestal formation; when associated with F-474." evidence="10 12">
    <original>Y</original>
    <variation>A</variation>
    <location>
        <position position="454"/>
    </location>
</feature>
<feature type="mutagenesis site" description="Does not inhibit translocation into the host cell. Almost no change in actin polymerization. Lack of pedestal formation; when associated with F-474." evidence="10 12">
    <original>Y</original>
    <variation>F</variation>
    <location>
        <position position="454"/>
    </location>
</feature>
<feature type="mutagenesis site" description="Loss of phosphorylation and strong decrease in actin polymerization." evidence="3 7 10 12">
    <original>Y</original>
    <variation>D</variation>
    <variation>E</variation>
    <location>
        <position position="474"/>
    </location>
</feature>
<feature type="mutagenesis site" description="Loss of phosphorylation and strong decrease in actin polymerization. Lack of pedestal formation; when associated with F-454." evidence="3 7 10 12">
    <original>Y</original>
    <variation>F</variation>
    <location>
        <position position="474"/>
    </location>
</feature>
<feature type="mutagenesis site" description="Does not inhibit translocation into the host cell. Loss of phosphorylation and strong decrease in actin polymerization." evidence="3 7 10 12">
    <original>Y</original>
    <variation>S</variation>
    <location>
        <position position="474"/>
    </location>
</feature>
<feature type="mutagenesis site" description="Does not inhibit translocation into the host cell." evidence="3">
    <original>Y</original>
    <variation>S</variation>
    <location>
        <position position="483"/>
    </location>
</feature>
<feature type="sequence conflict" description="In Ref. 1; AAB88410." evidence="15" ref="1">
    <original>NTPAQGGTDATRAEDASLN</original>
    <variation>IPQHKVALMPQERRRFSD</variation>
    <location>
        <begin position="412"/>
        <end position="430"/>
    </location>
</feature>
<feature type="sequence conflict" description="In Ref. 1; AAB88410." evidence="15" ref="1">
    <original>S</original>
    <variation>T</variation>
    <location>
        <position position="533"/>
    </location>
</feature>
<feature type="strand" evidence="16">
    <location>
        <begin position="41"/>
        <end position="43"/>
    </location>
</feature>
<feature type="strand" evidence="16">
    <location>
        <begin position="46"/>
        <end position="50"/>
    </location>
</feature>
<gene>
    <name type="primary">tir</name>
    <name type="synonym">espE</name>
    <name type="ordered locus">E2348C_3941</name>
</gene>
<accession>B7UM99</accession>
<accession>O50190</accession>
<accession>O52147</accession>